<proteinExistence type="evidence at protein level"/>
<name>DEF3B_RAT</name>
<reference key="1">
    <citation type="submission" date="1996-02" db="EMBL/GenBank/DDBJ databases">
        <title>Molecular characterization of genes encoding rat neutrophil defensins.</title>
        <authorList>
            <person name="Banaiee N."/>
            <person name="Yount N.Y."/>
            <person name="Selsted M.E."/>
        </authorList>
    </citation>
    <scope>NUCLEOTIDE SEQUENCE [GENOMIC DNA]</scope>
    <source>
        <strain>Sprague-Dawley</strain>
        <tissue>Neutrophil</tissue>
    </source>
</reference>
<reference key="2">
    <citation type="journal article" date="1989" name="Infect. Immun.">
        <title>Purification and antimicrobial properties of three defensins from rat neutrophils.</title>
        <authorList>
            <person name="Eisenhauer P.B."/>
            <person name="Harwig S.S.S.L."/>
            <person name="Szklarek D."/>
            <person name="Ganz T."/>
            <person name="Selsted M.E."/>
            <person name="Lehrer R.I."/>
        </authorList>
    </citation>
    <scope>PROTEIN SEQUENCE OF 59-87</scope>
    <source>
        <strain>Sprague-Dawley</strain>
        <tissue>Peritoneal neutrophil</tissue>
    </source>
</reference>
<evidence type="ECO:0000250" key="1"/>
<evidence type="ECO:0000255" key="2"/>
<evidence type="ECO:0000269" key="3">
    <source>
    </source>
</evidence>
<evidence type="ECO:0000305" key="4"/>
<keyword id="KW-0044">Antibiotic</keyword>
<keyword id="KW-0929">Antimicrobial</keyword>
<keyword id="KW-0211">Defensin</keyword>
<keyword id="KW-0903">Direct protein sequencing</keyword>
<keyword id="KW-1015">Disulfide bond</keyword>
<keyword id="KW-0295">Fungicide</keyword>
<keyword id="KW-1185">Reference proteome</keyword>
<keyword id="KW-0964">Secreted</keyword>
<keyword id="KW-0732">Signal</keyword>
<organism>
    <name type="scientific">Rattus norvegicus</name>
    <name type="common">Rat</name>
    <dbReference type="NCBI Taxonomy" id="10116"/>
    <lineage>
        <taxon>Eukaryota</taxon>
        <taxon>Metazoa</taxon>
        <taxon>Chordata</taxon>
        <taxon>Craniata</taxon>
        <taxon>Vertebrata</taxon>
        <taxon>Euteleostomi</taxon>
        <taxon>Mammalia</taxon>
        <taxon>Eutheria</taxon>
        <taxon>Euarchontoglires</taxon>
        <taxon>Glires</taxon>
        <taxon>Rodentia</taxon>
        <taxon>Myomorpha</taxon>
        <taxon>Muroidea</taxon>
        <taxon>Muridae</taxon>
        <taxon>Murinae</taxon>
        <taxon>Rattus</taxon>
    </lineage>
</organism>
<comment type="function">
    <text>Active in vitro against S.aureus, fungi, Gram-positive and Gram-negative bacteria and to a lesser extent against an enveloped virus.</text>
</comment>
<comment type="subcellular location">
    <subcellularLocation>
        <location>Secreted</location>
    </subcellularLocation>
</comment>
<comment type="similarity">
    <text evidence="4">Belongs to the alpha-defensin family.</text>
</comment>
<accession>Q9Z1F1</accession>
<dbReference type="EMBL" id="U50354">
    <property type="protein sequence ID" value="AAC99550.1"/>
    <property type="molecule type" value="Genomic_DNA"/>
</dbReference>
<dbReference type="PIR" id="B61014">
    <property type="entry name" value="B61014"/>
</dbReference>
<dbReference type="RefSeq" id="NP_001073367.2">
    <property type="nucleotide sequence ID" value="NM_001079898.4"/>
</dbReference>
<dbReference type="SMR" id="Q9Z1F1"/>
<dbReference type="FunCoup" id="Q9Z1F1">
    <property type="interactions" value="157"/>
</dbReference>
<dbReference type="STRING" id="10116.ENSRNOP00000071526"/>
<dbReference type="PaxDb" id="10116-ENSRNOP00000018580"/>
<dbReference type="Ensembl" id="ENSRNOT00000018580.8">
    <property type="protein sequence ID" value="ENSRNOP00000018580.4"/>
    <property type="gene ID" value="ENSRNOG00000038135.4"/>
</dbReference>
<dbReference type="GeneID" id="498659"/>
<dbReference type="KEGG" id="rno:498659"/>
<dbReference type="UCSC" id="RGD:1589653">
    <property type="organism name" value="rat"/>
</dbReference>
<dbReference type="AGR" id="RGD:1589653"/>
<dbReference type="CTD" id="498659"/>
<dbReference type="GeneTree" id="ENSGT00940000153268"/>
<dbReference type="HOGENOM" id="CLU_160803_3_0_1"/>
<dbReference type="InParanoid" id="Q9Z1F1"/>
<dbReference type="OMA" id="CHCSRTF"/>
<dbReference type="OrthoDB" id="9837636at2759"/>
<dbReference type="Reactome" id="R-RNO-1461973">
    <property type="pathway name" value="Defensins"/>
</dbReference>
<dbReference type="Reactome" id="R-RNO-1462054">
    <property type="pathway name" value="Alpha-defensins"/>
</dbReference>
<dbReference type="Reactome" id="R-RNO-6798695">
    <property type="pathway name" value="Neutrophil degranulation"/>
</dbReference>
<dbReference type="PRO" id="PR:Q9Z1F1"/>
<dbReference type="Proteomes" id="UP000002494">
    <property type="component" value="Chromosome 16"/>
</dbReference>
<dbReference type="Bgee" id="ENSRNOG00000038135">
    <property type="expression patterns" value="Expressed in thymus and 14 other cell types or tissues"/>
</dbReference>
<dbReference type="GO" id="GO:0005615">
    <property type="term" value="C:extracellular space"/>
    <property type="evidence" value="ECO:0000318"/>
    <property type="project" value="GO_Central"/>
</dbReference>
<dbReference type="GO" id="GO:0019731">
    <property type="term" value="P:antibacterial humoral response"/>
    <property type="evidence" value="ECO:0000318"/>
    <property type="project" value="GO_Central"/>
</dbReference>
<dbReference type="GO" id="GO:0061844">
    <property type="term" value="P:antimicrobial humoral immune response mediated by antimicrobial peptide"/>
    <property type="evidence" value="ECO:0000318"/>
    <property type="project" value="GO_Central"/>
</dbReference>
<dbReference type="GO" id="GO:0071222">
    <property type="term" value="P:cellular response to lipopolysaccharide"/>
    <property type="evidence" value="ECO:0000318"/>
    <property type="project" value="GO_Central"/>
</dbReference>
<dbReference type="GO" id="GO:0050832">
    <property type="term" value="P:defense response to fungus"/>
    <property type="evidence" value="ECO:0007669"/>
    <property type="project" value="UniProtKB-KW"/>
</dbReference>
<dbReference type="GO" id="GO:0050829">
    <property type="term" value="P:defense response to Gram-negative bacterium"/>
    <property type="evidence" value="ECO:0000318"/>
    <property type="project" value="GO_Central"/>
</dbReference>
<dbReference type="GO" id="GO:0050830">
    <property type="term" value="P:defense response to Gram-positive bacterium"/>
    <property type="evidence" value="ECO:0000318"/>
    <property type="project" value="GO_Central"/>
</dbReference>
<dbReference type="GO" id="GO:0051673">
    <property type="term" value="P:disruption of plasma membrane integrity in another organism"/>
    <property type="evidence" value="ECO:0000318"/>
    <property type="project" value="GO_Central"/>
</dbReference>
<dbReference type="GO" id="GO:0002227">
    <property type="term" value="P:innate immune response in mucosa"/>
    <property type="evidence" value="ECO:0000318"/>
    <property type="project" value="GO_Central"/>
</dbReference>
<dbReference type="GO" id="GO:0031640">
    <property type="term" value="P:killing of cells of another organism"/>
    <property type="evidence" value="ECO:0007669"/>
    <property type="project" value="UniProtKB-KW"/>
</dbReference>
<dbReference type="InterPro" id="IPR016327">
    <property type="entry name" value="Alpha-defensin"/>
</dbReference>
<dbReference type="InterPro" id="IPR006081">
    <property type="entry name" value="Alpha-defensin_C"/>
</dbReference>
<dbReference type="InterPro" id="IPR002366">
    <property type="entry name" value="Alpha-defensin_N"/>
</dbReference>
<dbReference type="InterPro" id="IPR006080">
    <property type="entry name" value="Beta/alpha-defensin_C"/>
</dbReference>
<dbReference type="PANTHER" id="PTHR11876">
    <property type="entry name" value="ALPHA-DEFENSIN 1"/>
    <property type="match status" value="1"/>
</dbReference>
<dbReference type="PANTHER" id="PTHR11876:SF31">
    <property type="entry name" value="DEFENSIN ALPHA 10-RELATED"/>
    <property type="match status" value="1"/>
</dbReference>
<dbReference type="Pfam" id="PF00323">
    <property type="entry name" value="Defensin_1"/>
    <property type="match status" value="1"/>
</dbReference>
<dbReference type="Pfam" id="PF00879">
    <property type="entry name" value="Defensin_propep"/>
    <property type="match status" value="1"/>
</dbReference>
<dbReference type="PIRSF" id="PIRSF001875">
    <property type="entry name" value="Alpha-defensin"/>
    <property type="match status" value="1"/>
</dbReference>
<dbReference type="SMART" id="SM01418">
    <property type="entry name" value="Defensin_propep"/>
    <property type="match status" value="1"/>
</dbReference>
<dbReference type="SMART" id="SM00048">
    <property type="entry name" value="DEFSN"/>
    <property type="match status" value="1"/>
</dbReference>
<dbReference type="SUPFAM" id="SSF57392">
    <property type="entry name" value="Defensin-like"/>
    <property type="match status" value="1"/>
</dbReference>
<dbReference type="PROSITE" id="PS00269">
    <property type="entry name" value="DEFENSIN"/>
    <property type="match status" value="1"/>
</dbReference>
<protein>
    <recommendedName>
        <fullName>Neutrophil antibiotic peptide NP-3B</fullName>
        <shortName>RatNP-3b</shortName>
    </recommendedName>
    <alternativeName>
        <fullName>Neutrophil defensin 3</fullName>
    </alternativeName>
</protein>
<sequence>MRTLILLTTLLLLALHTQAESPQGSTKEAPDEEQDISVFFGGDKGTALQDAAVKAGVTCSCRTSSCRFGERLSGACRLNGRIYRLCC</sequence>
<feature type="signal peptide" evidence="2">
    <location>
        <begin position="1"/>
        <end position="19"/>
    </location>
</feature>
<feature type="propeptide" id="PRO_0000006865" evidence="3">
    <location>
        <begin position="20"/>
        <end position="58"/>
    </location>
</feature>
<feature type="peptide" id="PRO_0000006866" description="Neutrophil antibiotic peptide NP-3B">
    <location>
        <begin position="59"/>
        <end position="87"/>
    </location>
</feature>
<feature type="disulfide bond" evidence="1">
    <location>
        <begin position="59"/>
        <end position="87"/>
    </location>
</feature>
<feature type="disulfide bond" evidence="1">
    <location>
        <begin position="61"/>
        <end position="76"/>
    </location>
</feature>
<feature type="disulfide bond" evidence="1">
    <location>
        <begin position="66"/>
        <end position="86"/>
    </location>
</feature>